<protein>
    <recommendedName>
        <fullName>Uncharacterized protein H233R</fullName>
        <shortName>pH233R</shortName>
    </recommendedName>
</protein>
<comment type="induction">
    <text evidence="1">Expressed in the late phase of the viral replicative cycle.</text>
</comment>
<comment type="similarity">
    <text evidence="1">Belongs to the asfivirus H233R family.</text>
</comment>
<reference key="1">
    <citation type="submission" date="2003-03" db="EMBL/GenBank/DDBJ databases">
        <title>African swine fever virus genomes.</title>
        <authorList>
            <person name="Kutish G.F."/>
            <person name="Rock D.L."/>
        </authorList>
    </citation>
    <scope>NUCLEOTIDE SEQUENCE [LARGE SCALE GENOMIC DNA]</scope>
</reference>
<dbReference type="EMBL" id="AY261366">
    <property type="status" value="NOT_ANNOTATED_CDS"/>
    <property type="molecule type" value="Genomic_DNA"/>
</dbReference>
<dbReference type="Proteomes" id="UP000000858">
    <property type="component" value="Segment"/>
</dbReference>
<proteinExistence type="inferred from homology"/>
<accession>P0CAA6</accession>
<keyword id="KW-0426">Late protein</keyword>
<organism>
    <name type="scientific">African swine fever virus (isolate Warthog/Namibia/Wart80/1980)</name>
    <name type="common">ASFV</name>
    <dbReference type="NCBI Taxonomy" id="561444"/>
    <lineage>
        <taxon>Viruses</taxon>
        <taxon>Varidnaviria</taxon>
        <taxon>Bamfordvirae</taxon>
        <taxon>Nucleocytoviricota</taxon>
        <taxon>Pokkesviricetes</taxon>
        <taxon>Asfuvirales</taxon>
        <taxon>Asfarviridae</taxon>
        <taxon>Asfivirus</taxon>
        <taxon>African swine fever virus</taxon>
    </lineage>
</organism>
<sequence length="233" mass="25773">MILIASPFSLAHLEYLHTWHVTIKNIAQQHGLDIKVAIVVSTSHLNTFLPISTALNIECITFPGCGIKEIDLLWARIKLFQHYCAIGARLLWLVSADIRPPVSTWPAIADSLKKGADAVVIPYPSRWNNLIPTVIKEIVVHQKKCLVAVDARHLDTDTQIVGAGMGCIVLTLKALMVRLSIGKQPIKILWPDLHGTAEGIPLEGVEVGWFLNAYAHKLNIRCLGAEHIAQHFI</sequence>
<name>VF233_ASFWA</name>
<evidence type="ECO:0000305" key="1"/>
<organismHost>
    <name type="scientific">Ornithodoros</name>
    <name type="common">relapsing fever ticks</name>
    <dbReference type="NCBI Taxonomy" id="6937"/>
</organismHost>
<organismHost>
    <name type="scientific">Phacochoerus aethiopicus</name>
    <name type="common">Warthog</name>
    <dbReference type="NCBI Taxonomy" id="85517"/>
</organismHost>
<organismHost>
    <name type="scientific">Phacochoerus africanus</name>
    <name type="common">Warthog</name>
    <dbReference type="NCBI Taxonomy" id="41426"/>
</organismHost>
<organismHost>
    <name type="scientific">Potamochoerus larvatus</name>
    <name type="common">Bushpig</name>
    <dbReference type="NCBI Taxonomy" id="273792"/>
</organismHost>
<organismHost>
    <name type="scientific">Sus scrofa</name>
    <name type="common">Pig</name>
    <dbReference type="NCBI Taxonomy" id="9823"/>
</organismHost>
<gene>
    <name type="ordered locus">War-128</name>
</gene>
<feature type="chain" id="PRO_0000373598" description="Uncharacterized protein H233R">
    <location>
        <begin position="1"/>
        <end position="233"/>
    </location>
</feature>